<name>GRPE_RHIE6</name>
<reference key="1">
    <citation type="journal article" date="2010" name="Appl. Environ. Microbiol.">
        <title>Conserved symbiotic plasmid DNA sequences in the multireplicon pangenomic structure of Rhizobium etli.</title>
        <authorList>
            <person name="Gonzalez V."/>
            <person name="Acosta J.L."/>
            <person name="Santamaria R.I."/>
            <person name="Bustos P."/>
            <person name="Fernandez J.L."/>
            <person name="Hernandez Gonzalez I.L."/>
            <person name="Diaz R."/>
            <person name="Flores M."/>
            <person name="Palacios R."/>
            <person name="Mora J."/>
            <person name="Davila G."/>
        </authorList>
    </citation>
    <scope>NUCLEOTIDE SEQUENCE [LARGE SCALE GENOMIC DNA]</scope>
    <source>
        <strain>CIAT 652</strain>
    </source>
</reference>
<comment type="function">
    <text evidence="1">Participates actively in the response to hyperosmotic and heat shock by preventing the aggregation of stress-denatured proteins, in association with DnaK and GrpE. It is the nucleotide exchange factor for DnaK and may function as a thermosensor. Unfolded proteins bind initially to DnaJ; upon interaction with the DnaJ-bound protein, DnaK hydrolyzes its bound ATP, resulting in the formation of a stable complex. GrpE releases ADP from DnaK; ATP binding to DnaK triggers the release of the substrate protein, thus completing the reaction cycle. Several rounds of ATP-dependent interactions between DnaJ, DnaK and GrpE are required for fully efficient folding.</text>
</comment>
<comment type="subunit">
    <text evidence="1">Homodimer.</text>
</comment>
<comment type="subcellular location">
    <subcellularLocation>
        <location evidence="1">Cytoplasm</location>
    </subcellularLocation>
</comment>
<comment type="similarity">
    <text evidence="1">Belongs to the GrpE family.</text>
</comment>
<keyword id="KW-0143">Chaperone</keyword>
<keyword id="KW-0963">Cytoplasm</keyword>
<keyword id="KW-0346">Stress response</keyword>
<evidence type="ECO:0000255" key="1">
    <source>
        <dbReference type="HAMAP-Rule" id="MF_01151"/>
    </source>
</evidence>
<evidence type="ECO:0000256" key="2">
    <source>
        <dbReference type="SAM" id="MobiDB-lite"/>
    </source>
</evidence>
<accession>B3PZA4</accession>
<organism>
    <name type="scientific">Rhizobium etli (strain CIAT 652)</name>
    <dbReference type="NCBI Taxonomy" id="491916"/>
    <lineage>
        <taxon>Bacteria</taxon>
        <taxon>Pseudomonadati</taxon>
        <taxon>Pseudomonadota</taxon>
        <taxon>Alphaproteobacteria</taxon>
        <taxon>Hyphomicrobiales</taxon>
        <taxon>Rhizobiaceae</taxon>
        <taxon>Rhizobium/Agrobacterium group</taxon>
        <taxon>Rhizobium</taxon>
    </lineage>
</organism>
<feature type="chain" id="PRO_1000137602" description="Protein GrpE">
    <location>
        <begin position="1"/>
        <end position="210"/>
    </location>
</feature>
<feature type="region of interest" description="Disordered" evidence="2">
    <location>
        <begin position="191"/>
        <end position="210"/>
    </location>
</feature>
<sequence>MTDETTKNGPDATAADAAADAAAYVENDTVQEETAQPDPLELLKAENSELRDRYLRLAAEMDNLRRRTEREVKDAKSYSVAGFARDMLAVSDNLRRALDAISPEAKATADAGLTSLIEGVEMTERAMLSALERHGVRKLEPVGQKFDPNFHQAMFEVPNSEVPNNTVVQVVQAGFTIGERVLRPAMVGVAKGGPKPAEAETNSVFDEKDA</sequence>
<gene>
    <name evidence="1" type="primary">grpE</name>
    <name type="ordered locus">RHECIAT_CH0000404</name>
</gene>
<protein>
    <recommendedName>
        <fullName evidence="1">Protein GrpE</fullName>
    </recommendedName>
    <alternativeName>
        <fullName evidence="1">HSP-70 cofactor</fullName>
    </alternativeName>
</protein>
<proteinExistence type="inferred from homology"/>
<dbReference type="EMBL" id="CP001074">
    <property type="protein sequence ID" value="ACE89398.1"/>
    <property type="molecule type" value="Genomic_DNA"/>
</dbReference>
<dbReference type="SMR" id="B3PZA4"/>
<dbReference type="KEGG" id="rec:RHECIAT_CH0000404"/>
<dbReference type="eggNOG" id="COG0576">
    <property type="taxonomic scope" value="Bacteria"/>
</dbReference>
<dbReference type="HOGENOM" id="CLU_057217_0_2_5"/>
<dbReference type="Proteomes" id="UP000008817">
    <property type="component" value="Chromosome"/>
</dbReference>
<dbReference type="GO" id="GO:0005737">
    <property type="term" value="C:cytoplasm"/>
    <property type="evidence" value="ECO:0007669"/>
    <property type="project" value="UniProtKB-SubCell"/>
</dbReference>
<dbReference type="GO" id="GO:0000774">
    <property type="term" value="F:adenyl-nucleotide exchange factor activity"/>
    <property type="evidence" value="ECO:0007669"/>
    <property type="project" value="InterPro"/>
</dbReference>
<dbReference type="GO" id="GO:0042803">
    <property type="term" value="F:protein homodimerization activity"/>
    <property type="evidence" value="ECO:0007669"/>
    <property type="project" value="InterPro"/>
</dbReference>
<dbReference type="GO" id="GO:0051087">
    <property type="term" value="F:protein-folding chaperone binding"/>
    <property type="evidence" value="ECO:0007669"/>
    <property type="project" value="InterPro"/>
</dbReference>
<dbReference type="GO" id="GO:0051082">
    <property type="term" value="F:unfolded protein binding"/>
    <property type="evidence" value="ECO:0007669"/>
    <property type="project" value="TreeGrafter"/>
</dbReference>
<dbReference type="GO" id="GO:0006457">
    <property type="term" value="P:protein folding"/>
    <property type="evidence" value="ECO:0007669"/>
    <property type="project" value="InterPro"/>
</dbReference>
<dbReference type="CDD" id="cd00446">
    <property type="entry name" value="GrpE"/>
    <property type="match status" value="1"/>
</dbReference>
<dbReference type="FunFam" id="2.30.22.10:FF:000001">
    <property type="entry name" value="Protein GrpE"/>
    <property type="match status" value="1"/>
</dbReference>
<dbReference type="Gene3D" id="3.90.20.20">
    <property type="match status" value="1"/>
</dbReference>
<dbReference type="Gene3D" id="2.30.22.10">
    <property type="entry name" value="Head domain of nucleotide exchange factor GrpE"/>
    <property type="match status" value="1"/>
</dbReference>
<dbReference type="HAMAP" id="MF_01151">
    <property type="entry name" value="GrpE"/>
    <property type="match status" value="1"/>
</dbReference>
<dbReference type="InterPro" id="IPR000740">
    <property type="entry name" value="GrpE"/>
</dbReference>
<dbReference type="InterPro" id="IPR013805">
    <property type="entry name" value="GrpE_coiled_coil"/>
</dbReference>
<dbReference type="InterPro" id="IPR009012">
    <property type="entry name" value="GrpE_head"/>
</dbReference>
<dbReference type="NCBIfam" id="NF010738">
    <property type="entry name" value="PRK14140.1"/>
    <property type="match status" value="1"/>
</dbReference>
<dbReference type="NCBIfam" id="NF010739">
    <property type="entry name" value="PRK14141.1"/>
    <property type="match status" value="1"/>
</dbReference>
<dbReference type="NCBIfam" id="NF010748">
    <property type="entry name" value="PRK14150.1"/>
    <property type="match status" value="1"/>
</dbReference>
<dbReference type="PANTHER" id="PTHR21237">
    <property type="entry name" value="GRPE PROTEIN"/>
    <property type="match status" value="1"/>
</dbReference>
<dbReference type="PANTHER" id="PTHR21237:SF23">
    <property type="entry name" value="GRPE PROTEIN HOMOLOG, MITOCHONDRIAL"/>
    <property type="match status" value="1"/>
</dbReference>
<dbReference type="Pfam" id="PF01025">
    <property type="entry name" value="GrpE"/>
    <property type="match status" value="1"/>
</dbReference>
<dbReference type="PRINTS" id="PR00773">
    <property type="entry name" value="GRPEPROTEIN"/>
</dbReference>
<dbReference type="SUPFAM" id="SSF58014">
    <property type="entry name" value="Coiled-coil domain of nucleotide exchange factor GrpE"/>
    <property type="match status" value="1"/>
</dbReference>
<dbReference type="SUPFAM" id="SSF51064">
    <property type="entry name" value="Head domain of nucleotide exchange factor GrpE"/>
    <property type="match status" value="1"/>
</dbReference>
<dbReference type="PROSITE" id="PS01071">
    <property type="entry name" value="GRPE"/>
    <property type="match status" value="1"/>
</dbReference>